<sequence>MANENHGSPREEASLLSHSPGTSNQSQPCSPKPIRLVQDLPEELVHAGWEKCWSRRENRPYYFNRFTNQSLWEMPVLGQHDVISDPLGLNATPLPQDSSLVETPPAENKPRKRQLSEEQPSGNGVKKPKIEIPVTPTGQSVPSSPSIPGTPTLKMWGTSPEDKQQAALLRPTEVYWDLDIQTNAVIKHRGPSEVLPPHPEVELLRSQLILKLRQHYRELCQQREGIEPPRESFNRWMLERKVVDKGSDPLLPSNCEPVVSPSMFREIMNDIPIRLSRIKFREEAKRLLFKYAEAARRLIESRSASPDSRKVVKWNVEDTFSWLRKDHSASKEDYMDRLEHLRRQCGPHVSAAAKDSVEGICSKIYHISLEYVKRIREKHLAILKENNISEEVEAPEVEPRLVYCYPVRLAVSAPPMPSVEMHMENNVVCIRYKGEMVKVSRNYFSKLWLLYRYSCIDDSAFERFLPRVWCLLRRYQMMFGVGLYEGTGLQGSLPVHVFEALHRLFGVSFECFASPLNCYFRQYCSAFPDTDGYFGSRGPCLDFAPLSGSFEANPPFCEELMDAMVSHFERLLESSPEPLSFIVFIPEWREPPTPALTRMEQSRFKRHQLILPAFEHEYRSGSQHICKKEEMHYKAVHNTAVLFLQNDPGFAKWAPTPERLQELSAAYRQSGRSHSSGSSSSSSSEAKDRDSGREQGPSREPHPT</sequence>
<protein>
    <recommendedName>
        <fullName>mRNA (2'-O-methyladenosine-N(6)-)-methyltransferase</fullName>
        <ecNumber evidence="7 8 9 10 11">2.1.1.62</ecNumber>
    </recommendedName>
    <alternativeName>
        <fullName evidence="13">Cap-specific adenosine methyltransferase</fullName>
        <shortName evidence="13">CAPAM</shortName>
        <shortName evidence="13">hCAPAM</shortName>
    </alternativeName>
    <alternativeName>
        <fullName evidence="12">Phosphorylated CTD-interacting factor 1</fullName>
        <shortName evidence="14">hPCIF1</shortName>
    </alternativeName>
    <alternativeName>
        <fullName>Protein phosphatase 1 regulatory subunit 121</fullName>
    </alternativeName>
</protein>
<keyword id="KW-0002">3D-structure</keyword>
<keyword id="KW-0489">Methyltransferase</keyword>
<keyword id="KW-0539">Nucleus</keyword>
<keyword id="KW-0597">Phosphoprotein</keyword>
<keyword id="KW-1267">Proteomics identification</keyword>
<keyword id="KW-1185">Reference proteome</keyword>
<keyword id="KW-0808">Transferase</keyword>
<dbReference type="EC" id="2.1.1.62" evidence="7 8 9 10 11"/>
<dbReference type="EMBL" id="AB050014">
    <property type="protein sequence ID" value="BAC45238.1"/>
    <property type="molecule type" value="mRNA"/>
</dbReference>
<dbReference type="EMBL" id="AL162458">
    <property type="status" value="NOT_ANNOTATED_CDS"/>
    <property type="molecule type" value="Genomic_DNA"/>
</dbReference>
<dbReference type="EMBL" id="CH471077">
    <property type="protein sequence ID" value="EAW75778.1"/>
    <property type="molecule type" value="Genomic_DNA"/>
</dbReference>
<dbReference type="EMBL" id="CH471077">
    <property type="protein sequence ID" value="EAW75780.1"/>
    <property type="molecule type" value="Genomic_DNA"/>
</dbReference>
<dbReference type="EMBL" id="BC013365">
    <property type="protein sequence ID" value="AAH13365.1"/>
    <property type="molecule type" value="mRNA"/>
</dbReference>
<dbReference type="EMBL" id="BC010005">
    <property type="protein sequence ID" value="AAH10005.1"/>
    <property type="molecule type" value="mRNA"/>
</dbReference>
<dbReference type="EMBL" id="AL137473">
    <property type="protein sequence ID" value="CAB70757.2"/>
    <property type="molecule type" value="mRNA"/>
</dbReference>
<dbReference type="CCDS" id="CCDS13388.1"/>
<dbReference type="RefSeq" id="NP_071387.1">
    <property type="nucleotide sequence ID" value="NM_022104.4"/>
</dbReference>
<dbReference type="RefSeq" id="XP_011527282.1">
    <property type="nucleotide sequence ID" value="XM_011528980.4"/>
</dbReference>
<dbReference type="RefSeq" id="XP_011527283.1">
    <property type="nucleotide sequence ID" value="XM_011528981.4"/>
</dbReference>
<dbReference type="RefSeq" id="XP_016883502.1">
    <property type="nucleotide sequence ID" value="XM_017028013.3"/>
</dbReference>
<dbReference type="RefSeq" id="XP_054179797.1">
    <property type="nucleotide sequence ID" value="XM_054323822.1"/>
</dbReference>
<dbReference type="RefSeq" id="XP_054179798.1">
    <property type="nucleotide sequence ID" value="XM_054323823.1"/>
</dbReference>
<dbReference type="RefSeq" id="XP_054179799.1">
    <property type="nucleotide sequence ID" value="XM_054323824.1"/>
</dbReference>
<dbReference type="PDB" id="2JX8">
    <property type="method" value="NMR"/>
    <property type="chains" value="A=40-86"/>
</dbReference>
<dbReference type="PDB" id="6IRV">
    <property type="method" value="X-ray"/>
    <property type="resolution" value="2.70 A"/>
    <property type="chains" value="A/B=174-672"/>
</dbReference>
<dbReference type="PDB" id="6IRW">
    <property type="method" value="X-ray"/>
    <property type="resolution" value="2.90 A"/>
    <property type="chains" value="A/B=174-672"/>
</dbReference>
<dbReference type="PDBsum" id="2JX8"/>
<dbReference type="PDBsum" id="6IRV"/>
<dbReference type="PDBsum" id="6IRW"/>
<dbReference type="BMRB" id="Q9H4Z3"/>
<dbReference type="SMR" id="Q9H4Z3"/>
<dbReference type="BioGRID" id="122003">
    <property type="interactions" value="22"/>
</dbReference>
<dbReference type="FunCoup" id="Q9H4Z3">
    <property type="interactions" value="2635"/>
</dbReference>
<dbReference type="IntAct" id="Q9H4Z3">
    <property type="interactions" value="15"/>
</dbReference>
<dbReference type="MINT" id="Q9H4Z3"/>
<dbReference type="STRING" id="9606.ENSP00000361486"/>
<dbReference type="ChEMBL" id="CHEMBL5465357"/>
<dbReference type="GlyGen" id="Q9H4Z3">
    <property type="glycosylation" value="2 sites"/>
</dbReference>
<dbReference type="iPTMnet" id="Q9H4Z3"/>
<dbReference type="PhosphoSitePlus" id="Q9H4Z3"/>
<dbReference type="BioMuta" id="PCIF1"/>
<dbReference type="DMDM" id="26392546"/>
<dbReference type="jPOST" id="Q9H4Z3"/>
<dbReference type="MassIVE" id="Q9H4Z3"/>
<dbReference type="PaxDb" id="9606-ENSP00000361486"/>
<dbReference type="PeptideAtlas" id="Q9H4Z3"/>
<dbReference type="ProteomicsDB" id="80885"/>
<dbReference type="Pumba" id="Q9H4Z3"/>
<dbReference type="Antibodypedia" id="27891">
    <property type="antibodies" value="91 antibodies from 19 providers"/>
</dbReference>
<dbReference type="DNASU" id="63935"/>
<dbReference type="Ensembl" id="ENST00000372409.8">
    <property type="protein sequence ID" value="ENSP00000361486.3"/>
    <property type="gene ID" value="ENSG00000100982.12"/>
</dbReference>
<dbReference type="GeneID" id="63935"/>
<dbReference type="KEGG" id="hsa:63935"/>
<dbReference type="MANE-Select" id="ENST00000372409.8">
    <property type="protein sequence ID" value="ENSP00000361486.3"/>
    <property type="RefSeq nucleotide sequence ID" value="NM_022104.4"/>
    <property type="RefSeq protein sequence ID" value="NP_071387.1"/>
</dbReference>
<dbReference type="UCSC" id="uc002xqs.4">
    <property type="organism name" value="human"/>
</dbReference>
<dbReference type="AGR" id="HGNC:16200"/>
<dbReference type="CTD" id="63935"/>
<dbReference type="DisGeNET" id="63935"/>
<dbReference type="GeneCards" id="PCIF1"/>
<dbReference type="HGNC" id="HGNC:16200">
    <property type="gene designation" value="PCIF1"/>
</dbReference>
<dbReference type="HPA" id="ENSG00000100982">
    <property type="expression patterns" value="Low tissue specificity"/>
</dbReference>
<dbReference type="MIM" id="618626">
    <property type="type" value="gene"/>
</dbReference>
<dbReference type="neXtProt" id="NX_Q9H4Z3"/>
<dbReference type="OpenTargets" id="ENSG00000100982"/>
<dbReference type="PharmGKB" id="PA162398977"/>
<dbReference type="VEuPathDB" id="HostDB:ENSG00000100982"/>
<dbReference type="eggNOG" id="ENOG502QVT7">
    <property type="taxonomic scope" value="Eukaryota"/>
</dbReference>
<dbReference type="GeneTree" id="ENSGT00390000016206"/>
<dbReference type="HOGENOM" id="CLU_014369_0_0_1"/>
<dbReference type="InParanoid" id="Q9H4Z3"/>
<dbReference type="OMA" id="ANENHRS"/>
<dbReference type="OrthoDB" id="193787at2759"/>
<dbReference type="PAN-GO" id="Q9H4Z3">
    <property type="GO annotations" value="1 GO annotation based on evolutionary models"/>
</dbReference>
<dbReference type="PhylomeDB" id="Q9H4Z3"/>
<dbReference type="TreeFam" id="TF350163"/>
<dbReference type="PathwayCommons" id="Q9H4Z3"/>
<dbReference type="SignaLink" id="Q9H4Z3"/>
<dbReference type="BioGRID-ORCS" id="63935">
    <property type="hits" value="26 hits in 1171 CRISPR screens"/>
</dbReference>
<dbReference type="ChiTaRS" id="PCIF1">
    <property type="organism name" value="human"/>
</dbReference>
<dbReference type="EvolutionaryTrace" id="Q9H4Z3"/>
<dbReference type="GenomeRNAi" id="63935"/>
<dbReference type="Pharos" id="Q9H4Z3">
    <property type="development level" value="Tbio"/>
</dbReference>
<dbReference type="PRO" id="PR:Q9H4Z3"/>
<dbReference type="Proteomes" id="UP000005640">
    <property type="component" value="Chromosome 20"/>
</dbReference>
<dbReference type="RNAct" id="Q9H4Z3">
    <property type="molecule type" value="protein"/>
</dbReference>
<dbReference type="Bgee" id="ENSG00000100982">
    <property type="expression patterns" value="Expressed in mucosa of stomach and 163 other cell types or tissues"/>
</dbReference>
<dbReference type="ExpressionAtlas" id="Q9H4Z3">
    <property type="expression patterns" value="baseline and differential"/>
</dbReference>
<dbReference type="GO" id="GO:0045171">
    <property type="term" value="C:intercellular bridge"/>
    <property type="evidence" value="ECO:0000314"/>
    <property type="project" value="HPA"/>
</dbReference>
<dbReference type="GO" id="GO:0015630">
    <property type="term" value="C:microtubule cytoskeleton"/>
    <property type="evidence" value="ECO:0000314"/>
    <property type="project" value="HPA"/>
</dbReference>
<dbReference type="GO" id="GO:0005654">
    <property type="term" value="C:nucleoplasm"/>
    <property type="evidence" value="ECO:0000314"/>
    <property type="project" value="HPA"/>
</dbReference>
<dbReference type="GO" id="GO:0005634">
    <property type="term" value="C:nucleus"/>
    <property type="evidence" value="ECO:0000314"/>
    <property type="project" value="UniProtKB"/>
</dbReference>
<dbReference type="GO" id="GO:0016422">
    <property type="term" value="F:mRNA (2'-O-methyladenosine-N6-)-methyltransferase activity"/>
    <property type="evidence" value="ECO:0000314"/>
    <property type="project" value="UniProtKB"/>
</dbReference>
<dbReference type="GO" id="GO:0099122">
    <property type="term" value="F:RNA polymerase II C-terminal domain binding"/>
    <property type="evidence" value="ECO:0000314"/>
    <property type="project" value="UniProtKB"/>
</dbReference>
<dbReference type="GO" id="GO:1990269">
    <property type="term" value="F:RNA polymerase II C-terminal domain phosphoserine binding"/>
    <property type="evidence" value="ECO:0000314"/>
    <property type="project" value="FlyBase"/>
</dbReference>
<dbReference type="GO" id="GO:1904047">
    <property type="term" value="F:S-adenosyl-L-methionine binding"/>
    <property type="evidence" value="ECO:0000314"/>
    <property type="project" value="UniProtKB"/>
</dbReference>
<dbReference type="GO" id="GO:0032259">
    <property type="term" value="P:methylation"/>
    <property type="evidence" value="ECO:0007669"/>
    <property type="project" value="UniProtKB-KW"/>
</dbReference>
<dbReference type="GO" id="GO:0006397">
    <property type="term" value="P:mRNA processing"/>
    <property type="evidence" value="ECO:0000314"/>
    <property type="project" value="UniProtKB"/>
</dbReference>
<dbReference type="GO" id="GO:0017148">
    <property type="term" value="P:negative regulation of translation"/>
    <property type="evidence" value="ECO:0000314"/>
    <property type="project" value="UniProtKB"/>
</dbReference>
<dbReference type="GO" id="GO:0045727">
    <property type="term" value="P:positive regulation of translation"/>
    <property type="evidence" value="ECO:0000315"/>
    <property type="project" value="UniProtKB"/>
</dbReference>
<dbReference type="CDD" id="cd00201">
    <property type="entry name" value="WW"/>
    <property type="match status" value="1"/>
</dbReference>
<dbReference type="FunFam" id="1.20.1270.10:FF:000020">
    <property type="entry name" value="Phosphorylated CTD-interacting factor 1"/>
    <property type="match status" value="1"/>
</dbReference>
<dbReference type="FunFam" id="2.20.70.10:FF:000036">
    <property type="entry name" value="Phosphorylated CTD-interacting factor 1"/>
    <property type="match status" value="1"/>
</dbReference>
<dbReference type="Gene3D" id="1.20.1270.10">
    <property type="match status" value="1"/>
</dbReference>
<dbReference type="Gene3D" id="2.20.70.10">
    <property type="match status" value="1"/>
</dbReference>
<dbReference type="InterPro" id="IPR029048">
    <property type="entry name" value="HSP70_C_sf"/>
</dbReference>
<dbReference type="InterPro" id="IPR039881">
    <property type="entry name" value="PCIF1-like"/>
</dbReference>
<dbReference type="InterPro" id="IPR022035">
    <property type="entry name" value="PCIF1_WW"/>
</dbReference>
<dbReference type="InterPro" id="IPR001202">
    <property type="entry name" value="WW_dom"/>
</dbReference>
<dbReference type="InterPro" id="IPR036020">
    <property type="entry name" value="WW_dom_sf"/>
</dbReference>
<dbReference type="PANTHER" id="PTHR21727:SF0">
    <property type="entry name" value="MRNA (2'-O-METHYLADENOSINE-N(6)-)-METHYLTRANSFERASE"/>
    <property type="match status" value="1"/>
</dbReference>
<dbReference type="PANTHER" id="PTHR21727">
    <property type="entry name" value="PHOSPHORYLATED CTD INTERACTING FACTOR 1"/>
    <property type="match status" value="1"/>
</dbReference>
<dbReference type="Pfam" id="PF12237">
    <property type="entry name" value="PCIF1_WW"/>
    <property type="match status" value="1"/>
</dbReference>
<dbReference type="Pfam" id="PF00397">
    <property type="entry name" value="WW"/>
    <property type="match status" value="1"/>
</dbReference>
<dbReference type="SMART" id="SM00456">
    <property type="entry name" value="WW"/>
    <property type="match status" value="1"/>
</dbReference>
<dbReference type="SUPFAM" id="SSF51045">
    <property type="entry name" value="WW domain"/>
    <property type="match status" value="1"/>
</dbReference>
<dbReference type="PROSITE" id="PS50020">
    <property type="entry name" value="WW_DOMAIN_2"/>
    <property type="match status" value="1"/>
</dbReference>
<proteinExistence type="evidence at protein level"/>
<feature type="chain" id="PRO_0000076087" description="mRNA (2'-O-methyladenosine-N(6)-)-methyltransferase">
    <location>
        <begin position="1"/>
        <end position="704"/>
    </location>
</feature>
<feature type="domain" description="WW" evidence="3">
    <location>
        <begin position="43"/>
        <end position="77"/>
    </location>
</feature>
<feature type="region of interest" description="Disordered" evidence="4">
    <location>
        <begin position="1"/>
        <end position="33"/>
    </location>
</feature>
<feature type="region of interest" description="Disordered" evidence="4">
    <location>
        <begin position="88"/>
        <end position="151"/>
    </location>
</feature>
<feature type="region of interest" description="Disordered" evidence="4">
    <location>
        <begin position="663"/>
        <end position="704"/>
    </location>
</feature>
<feature type="short sequence motif" description="Nuclear localization signal" evidence="2">
    <location>
        <begin position="109"/>
        <end position="113"/>
    </location>
</feature>
<feature type="short sequence motif" description="Nuclear localization signal" evidence="2">
    <location>
        <begin position="669"/>
        <end position="684"/>
    </location>
</feature>
<feature type="compositionally biased region" description="Polar residues" evidence="4">
    <location>
        <begin position="16"/>
        <end position="29"/>
    </location>
</feature>
<feature type="compositionally biased region" description="Polar residues" evidence="4">
    <location>
        <begin position="136"/>
        <end position="149"/>
    </location>
</feature>
<feature type="compositionally biased region" description="Low complexity" evidence="4">
    <location>
        <begin position="670"/>
        <end position="684"/>
    </location>
</feature>
<feature type="compositionally biased region" description="Basic and acidic residues" evidence="4">
    <location>
        <begin position="685"/>
        <end position="704"/>
    </location>
</feature>
<feature type="binding site" evidence="1">
    <location>
        <position position="235"/>
    </location>
    <ligand>
        <name>substrate</name>
    </ligand>
</feature>
<feature type="binding site" evidence="1">
    <location>
        <position position="265"/>
    </location>
    <ligand>
        <name>substrate</name>
    </ligand>
</feature>
<feature type="binding site" evidence="7 18">
    <location>
        <begin position="553"/>
        <end position="556"/>
    </location>
    <ligand>
        <name>S-adenosyl-L-methionine</name>
        <dbReference type="ChEBI" id="CHEBI:59789"/>
    </ligand>
</feature>
<feature type="binding site" evidence="1">
    <location>
        <position position="558"/>
    </location>
    <ligand>
        <name>substrate</name>
    </ligand>
</feature>
<feature type="binding site" evidence="1">
    <location>
        <begin position="588"/>
        <end position="592"/>
    </location>
    <ligand>
        <name>substrate</name>
    </ligand>
</feature>
<feature type="binding site" evidence="7 18">
    <location>
        <begin position="614"/>
        <end position="616"/>
    </location>
    <ligand>
        <name>S-adenosyl-L-methionine</name>
        <dbReference type="ChEBI" id="CHEBI:59789"/>
    </ligand>
</feature>
<feature type="modified residue" description="Phosphoserine" evidence="19">
    <location>
        <position position="30"/>
    </location>
</feature>
<feature type="modified residue" description="Phosphoserine" evidence="20 21 22">
    <location>
        <position position="116"/>
    </location>
</feature>
<feature type="modified residue" description="Phosphothreonine" evidence="20">
    <location>
        <position position="152"/>
    </location>
</feature>
<feature type="mutagenesis site" description="Abolishes formation of N(6),2'-O-dimethyladenosine cap (m6A(m))." evidence="9 10">
    <original>NPPF</original>
    <variation>APPA</variation>
    <variation>SPPG</variation>
    <location>
        <begin position="553"/>
        <end position="556"/>
    </location>
</feature>
<feature type="mutagenesis site" description="Strongly reduced formation of N(6),2'-O-dimethyladenosine cap (m6A(m))." evidence="7 8">
    <original>N</original>
    <variation>A</variation>
    <location>
        <position position="553"/>
    </location>
</feature>
<feature type="mutagenesis site" description="Strongly reduced formation of N(6),2'-O-dimethyladenosine cap (m6A(m))." evidence="8">
    <original>F</original>
    <variation>G</variation>
    <location>
        <position position="556"/>
    </location>
</feature>
<feature type="helix" evidence="23">
    <location>
        <begin position="42"/>
        <end position="47"/>
    </location>
</feature>
<feature type="strand" evidence="23">
    <location>
        <begin position="51"/>
        <end position="54"/>
    </location>
</feature>
<feature type="turn" evidence="23">
    <location>
        <begin position="55"/>
        <end position="58"/>
    </location>
</feature>
<feature type="strand" evidence="23">
    <location>
        <begin position="59"/>
        <end position="64"/>
    </location>
</feature>
<feature type="turn" evidence="23">
    <location>
        <begin position="65"/>
        <end position="68"/>
    </location>
</feature>
<feature type="strand" evidence="23">
    <location>
        <begin position="69"/>
        <end position="73"/>
    </location>
</feature>
<feature type="strand" evidence="24">
    <location>
        <begin position="185"/>
        <end position="187"/>
    </location>
</feature>
<feature type="strand" evidence="25">
    <location>
        <begin position="192"/>
        <end position="194"/>
    </location>
</feature>
<feature type="helix" evidence="24">
    <location>
        <begin position="199"/>
        <end position="224"/>
    </location>
</feature>
<feature type="helix" evidence="24">
    <location>
        <begin position="232"/>
        <end position="243"/>
    </location>
</feature>
<feature type="strand" evidence="24">
    <location>
        <begin position="249"/>
        <end position="251"/>
    </location>
</feature>
<feature type="strand" evidence="24">
    <location>
        <begin position="256"/>
        <end position="259"/>
    </location>
</feature>
<feature type="helix" evidence="24">
    <location>
        <begin position="261"/>
        <end position="269"/>
    </location>
</feature>
<feature type="helix" evidence="24">
    <location>
        <begin position="281"/>
        <end position="301"/>
    </location>
</feature>
<feature type="helix" evidence="24">
    <location>
        <begin position="308"/>
        <end position="325"/>
    </location>
</feature>
<feature type="helix" evidence="24">
    <location>
        <begin position="331"/>
        <end position="352"/>
    </location>
</feature>
<feature type="helix" evidence="24">
    <location>
        <begin position="354"/>
        <end position="385"/>
    </location>
</feature>
<feature type="strand" evidence="24">
    <location>
        <begin position="401"/>
        <end position="403"/>
    </location>
</feature>
<feature type="strand" evidence="24">
    <location>
        <begin position="409"/>
        <end position="411"/>
    </location>
</feature>
<feature type="strand" evidence="24">
    <location>
        <begin position="420"/>
        <end position="432"/>
    </location>
</feature>
<feature type="strand" evidence="24">
    <location>
        <begin position="435"/>
        <end position="440"/>
    </location>
</feature>
<feature type="helix" evidence="24">
    <location>
        <begin position="441"/>
        <end position="454"/>
    </location>
</feature>
<feature type="helix" evidence="24">
    <location>
        <begin position="459"/>
        <end position="461"/>
    </location>
</feature>
<feature type="helix" evidence="24">
    <location>
        <begin position="464"/>
        <end position="478"/>
    </location>
</feature>
<feature type="helix" evidence="24">
    <location>
        <begin position="495"/>
        <end position="505"/>
    </location>
</feature>
<feature type="strand" evidence="24">
    <location>
        <begin position="509"/>
        <end position="512"/>
    </location>
</feature>
<feature type="turn" evidence="24">
    <location>
        <begin position="515"/>
        <end position="517"/>
    </location>
</feature>
<feature type="strand" evidence="24">
    <location>
        <begin position="519"/>
        <end position="521"/>
    </location>
</feature>
<feature type="helix" evidence="24">
    <location>
        <begin position="528"/>
        <end position="531"/>
    </location>
</feature>
<feature type="helix" evidence="24">
    <location>
        <begin position="532"/>
        <end position="534"/>
    </location>
</feature>
<feature type="helix" evidence="25">
    <location>
        <begin position="540"/>
        <end position="542"/>
    </location>
</feature>
<feature type="strand" evidence="24">
    <location>
        <begin position="546"/>
        <end position="552"/>
    </location>
</feature>
<feature type="helix" evidence="24">
    <location>
        <begin position="558"/>
        <end position="573"/>
    </location>
</feature>
<feature type="strand" evidence="24">
    <location>
        <begin position="579"/>
        <end position="586"/>
    </location>
</feature>
<feature type="strand" evidence="25">
    <location>
        <begin position="589"/>
        <end position="591"/>
    </location>
</feature>
<feature type="helix" evidence="24">
    <location>
        <begin position="594"/>
        <end position="601"/>
    </location>
</feature>
<feature type="strand" evidence="24">
    <location>
        <begin position="605"/>
        <end position="611"/>
    </location>
</feature>
<feature type="strand" evidence="24">
    <location>
        <begin position="617"/>
        <end position="619"/>
    </location>
</feature>
<feature type="turn" evidence="24">
    <location>
        <begin position="621"/>
        <end position="625"/>
    </location>
</feature>
<feature type="helix" evidence="24">
    <location>
        <begin position="628"/>
        <end position="630"/>
    </location>
</feature>
<feature type="strand" evidence="24">
    <location>
        <begin position="631"/>
        <end position="634"/>
    </location>
</feature>
<feature type="strand" evidence="24">
    <location>
        <begin position="639"/>
        <end position="645"/>
    </location>
</feature>
<feature type="helix" evidence="24">
    <location>
        <begin position="647"/>
        <end position="652"/>
    </location>
</feature>
<feature type="helix" evidence="24">
    <location>
        <begin position="657"/>
        <end position="665"/>
    </location>
</feature>
<name>CAPAM_HUMAN</name>
<accession>Q9H4Z3</accession>
<accession>E1P5P1</accession>
<accession>Q54AB9</accession>
<accession>Q9NT85</accession>
<reference key="1">
    <citation type="journal article" date="2003" name="Biochem. Biophys. Res. Commun.">
        <title>PCIF1, a novel human WW domain-containing protein, interacts with the phosphorylated RNA polymerase II.</title>
        <authorList>
            <person name="Fan H."/>
            <person name="Sakuraba K."/>
            <person name="Komuro A."/>
            <person name="Kato S."/>
            <person name="Harada F."/>
            <person name="Hirose Y."/>
        </authorList>
    </citation>
    <scope>NUCLEOTIDE SEQUENCE [MRNA]</scope>
    <scope>SUBCELLULAR LOCATION</scope>
    <scope>TISSUE SPECIFICITY</scope>
    <scope>INTERACTION WITH POLR2A</scope>
    <source>
        <tissue>Hepatoma</tissue>
    </source>
</reference>
<reference key="2">
    <citation type="journal article" date="2001" name="Nature">
        <title>The DNA sequence and comparative analysis of human chromosome 20.</title>
        <authorList>
            <person name="Deloukas P."/>
            <person name="Matthews L.H."/>
            <person name="Ashurst J.L."/>
            <person name="Burton J."/>
            <person name="Gilbert J.G.R."/>
            <person name="Jones M."/>
            <person name="Stavrides G."/>
            <person name="Almeida J.P."/>
            <person name="Babbage A.K."/>
            <person name="Bagguley C.L."/>
            <person name="Bailey J."/>
            <person name="Barlow K.F."/>
            <person name="Bates K.N."/>
            <person name="Beard L.M."/>
            <person name="Beare D.M."/>
            <person name="Beasley O.P."/>
            <person name="Bird C.P."/>
            <person name="Blakey S.E."/>
            <person name="Bridgeman A.M."/>
            <person name="Brown A.J."/>
            <person name="Buck D."/>
            <person name="Burrill W.D."/>
            <person name="Butler A.P."/>
            <person name="Carder C."/>
            <person name="Carter N.P."/>
            <person name="Chapman J.C."/>
            <person name="Clamp M."/>
            <person name="Clark G."/>
            <person name="Clark L.N."/>
            <person name="Clark S.Y."/>
            <person name="Clee C.M."/>
            <person name="Clegg S."/>
            <person name="Cobley V.E."/>
            <person name="Collier R.E."/>
            <person name="Connor R.E."/>
            <person name="Corby N.R."/>
            <person name="Coulson A."/>
            <person name="Coville G.J."/>
            <person name="Deadman R."/>
            <person name="Dhami P.D."/>
            <person name="Dunn M."/>
            <person name="Ellington A.G."/>
            <person name="Frankland J.A."/>
            <person name="Fraser A."/>
            <person name="French L."/>
            <person name="Garner P."/>
            <person name="Grafham D.V."/>
            <person name="Griffiths C."/>
            <person name="Griffiths M.N.D."/>
            <person name="Gwilliam R."/>
            <person name="Hall R.E."/>
            <person name="Hammond S."/>
            <person name="Harley J.L."/>
            <person name="Heath P.D."/>
            <person name="Ho S."/>
            <person name="Holden J.L."/>
            <person name="Howden P.J."/>
            <person name="Huckle E."/>
            <person name="Hunt A.R."/>
            <person name="Hunt S.E."/>
            <person name="Jekosch K."/>
            <person name="Johnson C.M."/>
            <person name="Johnson D."/>
            <person name="Kay M.P."/>
            <person name="Kimberley A.M."/>
            <person name="King A."/>
            <person name="Knights A."/>
            <person name="Laird G.K."/>
            <person name="Lawlor S."/>
            <person name="Lehvaeslaiho M.H."/>
            <person name="Leversha M.A."/>
            <person name="Lloyd C."/>
            <person name="Lloyd D.M."/>
            <person name="Lovell J.D."/>
            <person name="Marsh V.L."/>
            <person name="Martin S.L."/>
            <person name="McConnachie L.J."/>
            <person name="McLay K."/>
            <person name="McMurray A.A."/>
            <person name="Milne S.A."/>
            <person name="Mistry D."/>
            <person name="Moore M.J.F."/>
            <person name="Mullikin J.C."/>
            <person name="Nickerson T."/>
            <person name="Oliver K."/>
            <person name="Parker A."/>
            <person name="Patel R."/>
            <person name="Pearce T.A.V."/>
            <person name="Peck A.I."/>
            <person name="Phillimore B.J.C.T."/>
            <person name="Prathalingam S.R."/>
            <person name="Plumb R.W."/>
            <person name="Ramsay H."/>
            <person name="Rice C.M."/>
            <person name="Ross M.T."/>
            <person name="Scott C.E."/>
            <person name="Sehra H.K."/>
            <person name="Shownkeen R."/>
            <person name="Sims S."/>
            <person name="Skuce C.D."/>
            <person name="Smith M.L."/>
            <person name="Soderlund C."/>
            <person name="Steward C.A."/>
            <person name="Sulston J.E."/>
            <person name="Swann R.M."/>
            <person name="Sycamore N."/>
            <person name="Taylor R."/>
            <person name="Tee L."/>
            <person name="Thomas D.W."/>
            <person name="Thorpe A."/>
            <person name="Tracey A."/>
            <person name="Tromans A.C."/>
            <person name="Vaudin M."/>
            <person name="Wall M."/>
            <person name="Wallis J.M."/>
            <person name="Whitehead S.L."/>
            <person name="Whittaker P."/>
            <person name="Willey D.L."/>
            <person name="Williams L."/>
            <person name="Williams S.A."/>
            <person name="Wilming L."/>
            <person name="Wray P.W."/>
            <person name="Hubbard T."/>
            <person name="Durbin R.M."/>
            <person name="Bentley D.R."/>
            <person name="Beck S."/>
            <person name="Rogers J."/>
        </authorList>
    </citation>
    <scope>NUCLEOTIDE SEQUENCE [LARGE SCALE GENOMIC DNA]</scope>
</reference>
<reference key="3">
    <citation type="submission" date="2005-09" db="EMBL/GenBank/DDBJ databases">
        <authorList>
            <person name="Mural R.J."/>
            <person name="Istrail S."/>
            <person name="Sutton G.G."/>
            <person name="Florea L."/>
            <person name="Halpern A.L."/>
            <person name="Mobarry C.M."/>
            <person name="Lippert R."/>
            <person name="Walenz B."/>
            <person name="Shatkay H."/>
            <person name="Dew I."/>
            <person name="Miller J.R."/>
            <person name="Flanigan M.J."/>
            <person name="Edwards N.J."/>
            <person name="Bolanos R."/>
            <person name="Fasulo D."/>
            <person name="Halldorsson B.V."/>
            <person name="Hannenhalli S."/>
            <person name="Turner R."/>
            <person name="Yooseph S."/>
            <person name="Lu F."/>
            <person name="Nusskern D.R."/>
            <person name="Shue B.C."/>
            <person name="Zheng X.H."/>
            <person name="Zhong F."/>
            <person name="Delcher A.L."/>
            <person name="Huson D.H."/>
            <person name="Kravitz S.A."/>
            <person name="Mouchard L."/>
            <person name="Reinert K."/>
            <person name="Remington K.A."/>
            <person name="Clark A.G."/>
            <person name="Waterman M.S."/>
            <person name="Eichler E.E."/>
            <person name="Adams M.D."/>
            <person name="Hunkapiller M.W."/>
            <person name="Myers E.W."/>
            <person name="Venter J.C."/>
        </authorList>
    </citation>
    <scope>NUCLEOTIDE SEQUENCE [LARGE SCALE GENOMIC DNA]</scope>
</reference>
<reference key="4">
    <citation type="journal article" date="2004" name="Genome Res.">
        <title>The status, quality, and expansion of the NIH full-length cDNA project: the Mammalian Gene Collection (MGC).</title>
        <authorList>
            <consortium name="The MGC Project Team"/>
        </authorList>
    </citation>
    <scope>NUCLEOTIDE SEQUENCE [LARGE SCALE MRNA]</scope>
    <source>
        <tissue>Muscle</tissue>
        <tissue>Pancreas</tissue>
    </source>
</reference>
<reference key="5">
    <citation type="journal article" date="2007" name="BMC Genomics">
        <title>The full-ORF clone resource of the German cDNA consortium.</title>
        <authorList>
            <person name="Bechtel S."/>
            <person name="Rosenfelder H."/>
            <person name="Duda A."/>
            <person name="Schmidt C.P."/>
            <person name="Ernst U."/>
            <person name="Wellenreuther R."/>
            <person name="Mehrle A."/>
            <person name="Schuster C."/>
            <person name="Bahr A."/>
            <person name="Bloecker H."/>
            <person name="Heubner D."/>
            <person name="Hoerlein A."/>
            <person name="Michel G."/>
            <person name="Wedler H."/>
            <person name="Koehrer K."/>
            <person name="Ottenwaelder B."/>
            <person name="Poustka A."/>
            <person name="Wiemann S."/>
            <person name="Schupp I."/>
        </authorList>
    </citation>
    <scope>NUCLEOTIDE SEQUENCE [LARGE SCALE MRNA] OF 383-704</scope>
    <source>
        <tissue>Testis</tissue>
    </source>
</reference>
<reference key="6">
    <citation type="journal article" date="2008" name="Biochem. Biophys. Res. Commun.">
        <title>Human phosphorylated CTD-interacting protein, PCIF1, negatively modulates gene expression by RNA polymerase II.</title>
        <authorList>
            <person name="Hirose Y."/>
            <person name="Iwamoto Y."/>
            <person name="Sakuraba K."/>
            <person name="Yunokuchi I."/>
            <person name="Harada F."/>
            <person name="Ohkuma Y."/>
        </authorList>
    </citation>
    <scope>SUBCELLULAR LOCATION</scope>
    <scope>INTERACTION WITH POLR2A</scope>
</reference>
<reference key="7">
    <citation type="journal article" date="2008" name="Proc. Natl. Acad. Sci. U.S.A.">
        <title>A quantitative atlas of mitotic phosphorylation.</title>
        <authorList>
            <person name="Dephoure N."/>
            <person name="Zhou C."/>
            <person name="Villen J."/>
            <person name="Beausoleil S.A."/>
            <person name="Bakalarski C.E."/>
            <person name="Elledge S.J."/>
            <person name="Gygi S.P."/>
        </authorList>
    </citation>
    <scope>PHOSPHORYLATION [LARGE SCALE ANALYSIS] AT SER-30</scope>
    <scope>IDENTIFICATION BY MASS SPECTROMETRY [LARGE SCALE ANALYSIS]</scope>
    <source>
        <tissue>Cervix carcinoma</tissue>
    </source>
</reference>
<reference key="8">
    <citation type="journal article" date="2009" name="Anal. Chem.">
        <title>Lys-N and trypsin cover complementary parts of the phosphoproteome in a refined SCX-based approach.</title>
        <authorList>
            <person name="Gauci S."/>
            <person name="Helbig A.O."/>
            <person name="Slijper M."/>
            <person name="Krijgsveld J."/>
            <person name="Heck A.J."/>
            <person name="Mohammed S."/>
        </authorList>
    </citation>
    <scope>IDENTIFICATION BY MASS SPECTROMETRY [LARGE SCALE ANALYSIS]</scope>
</reference>
<reference key="9">
    <citation type="journal article" date="2009" name="Sci. Signal.">
        <title>Quantitative phosphoproteomic analysis of T cell receptor signaling reveals system-wide modulation of protein-protein interactions.</title>
        <authorList>
            <person name="Mayya V."/>
            <person name="Lundgren D.H."/>
            <person name="Hwang S.-I."/>
            <person name="Rezaul K."/>
            <person name="Wu L."/>
            <person name="Eng J.K."/>
            <person name="Rodionov V."/>
            <person name="Han D.K."/>
        </authorList>
    </citation>
    <scope>PHOSPHORYLATION [LARGE SCALE ANALYSIS] AT SER-116 AND THR-152</scope>
    <scope>IDENTIFICATION BY MASS SPECTROMETRY [LARGE SCALE ANALYSIS]</scope>
    <source>
        <tissue>Leukemic T-cell</tissue>
    </source>
</reference>
<reference key="10">
    <citation type="journal article" date="2011" name="Sci. Signal.">
        <title>System-wide temporal characterization of the proteome and phosphoproteome of human embryonic stem cell differentiation.</title>
        <authorList>
            <person name="Rigbolt K.T."/>
            <person name="Prokhorova T.A."/>
            <person name="Akimov V."/>
            <person name="Henningsen J."/>
            <person name="Johansen P.T."/>
            <person name="Kratchmarova I."/>
            <person name="Kassem M."/>
            <person name="Mann M."/>
            <person name="Olsen J.V."/>
            <person name="Blagoev B."/>
        </authorList>
    </citation>
    <scope>PHOSPHORYLATION [LARGE SCALE ANALYSIS] AT SER-116</scope>
    <scope>IDENTIFICATION BY MASS SPECTROMETRY [LARGE SCALE ANALYSIS]</scope>
</reference>
<reference key="11">
    <citation type="journal article" date="2013" name="J. Proteome Res.">
        <title>Toward a comprehensive characterization of a human cancer cell phosphoproteome.</title>
        <authorList>
            <person name="Zhou H."/>
            <person name="Di Palma S."/>
            <person name="Preisinger C."/>
            <person name="Peng M."/>
            <person name="Polat A.N."/>
            <person name="Heck A.J."/>
            <person name="Mohammed S."/>
        </authorList>
    </citation>
    <scope>PHOSPHORYLATION [LARGE SCALE ANALYSIS] AT SER-116</scope>
    <scope>IDENTIFICATION BY MASS SPECTROMETRY [LARGE SCALE ANALYSIS]</scope>
    <source>
        <tissue>Erythroleukemia</tissue>
    </source>
</reference>
<reference key="12">
    <citation type="journal article" date="2014" name="J. Proteomics">
        <title>An enzyme assisted RP-RPLC approach for in-depth analysis of human liver phosphoproteome.</title>
        <authorList>
            <person name="Bian Y."/>
            <person name="Song C."/>
            <person name="Cheng K."/>
            <person name="Dong M."/>
            <person name="Wang F."/>
            <person name="Huang J."/>
            <person name="Sun D."/>
            <person name="Wang L."/>
            <person name="Ye M."/>
            <person name="Zou H."/>
        </authorList>
    </citation>
    <scope>IDENTIFICATION BY MASS SPECTROMETRY [LARGE SCALE ANALYSIS]</scope>
    <source>
        <tissue>Liver</tissue>
    </source>
</reference>
<reference key="13">
    <citation type="journal article" date="2019" name="Cell Res.">
        <title>Cap-specific, terminal N6-methylation by a mammalian m6Am methyltransferase.</title>
        <authorList>
            <person name="Sun H."/>
            <person name="Zhang M."/>
            <person name="Li K."/>
            <person name="Bai D."/>
            <person name="Yi C."/>
        </authorList>
    </citation>
    <scope>FUNCTION</scope>
    <scope>CATALYTIC ACTIVITY</scope>
    <scope>MUTAGENESIS OF ASN-553 AND PHE-556</scope>
</reference>
<reference key="14">
    <citation type="journal article" date="2019" name="Mol. Cell">
        <title>Identification of the m6Am methyltransferase PCIF1 reveals the location and functions of m6Am in the transcriptome.</title>
        <authorList>
            <person name="Boulias K."/>
            <person name="Toczydlowska-Socha D."/>
            <person name="Hawley B.R."/>
            <person name="Liberman N."/>
            <person name="Takashima K."/>
            <person name="Zaccara S."/>
            <person name="Guez T."/>
            <person name="Vasseur J.J."/>
            <person name="Debart F."/>
            <person name="Aravind L."/>
            <person name="Jaffrey S.R."/>
            <person name="Greer E.L."/>
        </authorList>
    </citation>
    <scope>FUNCTION</scope>
    <scope>CATALYTIC ACTIVITY</scope>
    <scope>BIOPHYSICOCHEMICAL PROPERTIES</scope>
    <scope>MUTAGENESIS OF 553-SER--PHE-556</scope>
</reference>
<reference key="15">
    <citation type="journal article" date="2019" name="Mol. Cell">
        <title>PCIF1 catalyzes m6Am mRNA methylation to regulate gene expression.</title>
        <authorList>
            <person name="Sendinc E."/>
            <person name="Valle-Garcia D."/>
            <person name="Dhall A."/>
            <person name="Chen H."/>
            <person name="Henriques T."/>
            <person name="Navarrete-Perea J."/>
            <person name="Sheng W."/>
            <person name="Gygi S.P."/>
            <person name="Adelman K."/>
            <person name="Shi Y."/>
        </authorList>
    </citation>
    <scope>FUNCTION</scope>
    <scope>CATALYTIC ACTIVITY</scope>
    <scope>BIOPHYSICOCHEMICAL PROPERTIES</scope>
    <scope>SUBCELLULAR LOCATION</scope>
    <scope>MUTAGENESIS OF 553-SER--PHE-556</scope>
</reference>
<reference key="16">
    <citation type="journal article" date="2021" name="J. Biol. Chem.">
        <title>Enzymatic characterization of three human RNA adenosine methyltransferases reveals diverse substrate affinities and reaction optima.</title>
        <authorList>
            <person name="Yu D."/>
            <person name="Kaur G."/>
            <person name="Blumenthal R.M."/>
            <person name="Zhang X."/>
            <person name="Cheng X."/>
        </authorList>
    </citation>
    <scope>FUNCTION</scope>
    <scope>CATALYTIC ACTIVITY</scope>
    <scope>BIOPHYSICOCHEMICAL PROPERTIES</scope>
    <scope>ACTIVITY REGULATION</scope>
</reference>
<reference evidence="17" key="17">
    <citation type="submission" date="2007-11" db="PDB data bank">
        <title>1H, 13C, and 15N resonance assignments of hPCIF1 WW domain.</title>
        <authorList>
            <person name="Kouno T."/>
            <person name="Iwamoto Y."/>
            <person name="Hirose Y."/>
            <person name="Aizawa T."/>
            <person name="Demura M."/>
            <person name="Kawano K."/>
            <person name="Ohkuma Y."/>
            <person name="Mizuguchi M."/>
        </authorList>
    </citation>
    <scope>STRUCTURE BY NMR OF 40-86</scope>
</reference>
<reference key="18">
    <citation type="journal article" date="2018" name="Science">
        <title>Cap-specific terminal N6-methylation of RNA by an RNA polymerase II-associated methyltransferase.</title>
        <authorList>
            <person name="Akichika S."/>
            <person name="Hirano S."/>
            <person name="Shichino Y."/>
            <person name="Suzuki T."/>
            <person name="Nishimasu H."/>
            <person name="Ishitani R."/>
            <person name="Sugita A."/>
            <person name="Hirose Y."/>
            <person name="Iwasaki S."/>
            <person name="Nureki O."/>
            <person name="Suzuki T."/>
        </authorList>
    </citation>
    <scope>X-RAY CRYSTALLOGRAPHY (2.7 ANGSTROMS) OF 174-672 IN COMPLEX WITH S-ADENOSYL-L-METHIONINE</scope>
    <scope>FUNCTION</scope>
    <scope>CATALYTIC ACTIVITY</scope>
    <scope>BIOPHYSICOCHEMICAL PROPERTIES</scope>
    <scope>INTERACTION WITH POLR2A</scope>
    <scope>MUTAGENESIS OF ASN-553</scope>
</reference>
<organism>
    <name type="scientific">Homo sapiens</name>
    <name type="common">Human</name>
    <dbReference type="NCBI Taxonomy" id="9606"/>
    <lineage>
        <taxon>Eukaryota</taxon>
        <taxon>Metazoa</taxon>
        <taxon>Chordata</taxon>
        <taxon>Craniata</taxon>
        <taxon>Vertebrata</taxon>
        <taxon>Euteleostomi</taxon>
        <taxon>Mammalia</taxon>
        <taxon>Eutheria</taxon>
        <taxon>Euarchontoglires</taxon>
        <taxon>Primates</taxon>
        <taxon>Haplorrhini</taxon>
        <taxon>Catarrhini</taxon>
        <taxon>Hominidae</taxon>
        <taxon>Homo</taxon>
    </lineage>
</organism>
<comment type="function">
    <text evidence="7 8 9 10 11">Cap-specific adenosine methyltransferase that catalyzes formation of N(6),2'-O-dimethyladenosine cap (m6A(m)) by methylating the adenosine at the second transcribed position of capped mRNAs (PubMed:30467178, PubMed:30487554, PubMed:31279658, PubMed:31279659, PubMed:33428944). Recruited to the early elongation complex of RNA polymerase II (RNAPII) via interaction with POLR2A and mediates formation of m6A(m) co-transcriptionally (PubMed:30467178).</text>
</comment>
<comment type="catalytic activity">
    <reaction evidence="7 8 9 10 11">
        <text>a 5'-end (N(7)-methyl 5'-triphosphoguanosine)-(2'-O-methyladenosine) in mRNA + S-adenosyl-L-methionine = a 5'-end (N(7)-methyl 5'-triphosphoguanosine)-(N(6),2'-O-dimethyladenosine) in mRNA + S-adenosyl-L-homocysteine + H(+)</text>
        <dbReference type="Rhea" id="RHEA:22744"/>
        <dbReference type="Rhea" id="RHEA-COMP:11518"/>
        <dbReference type="Rhea" id="RHEA-COMP:11519"/>
        <dbReference type="ChEBI" id="CHEBI:15378"/>
        <dbReference type="ChEBI" id="CHEBI:57856"/>
        <dbReference type="ChEBI" id="CHEBI:59789"/>
        <dbReference type="ChEBI" id="CHEBI:85958"/>
        <dbReference type="ChEBI" id="CHEBI:85959"/>
        <dbReference type="EC" id="2.1.1.62"/>
    </reaction>
    <physiologicalReaction direction="left-to-right" evidence="7 8 9 10 11">
        <dbReference type="Rhea" id="RHEA:22745"/>
    </physiologicalReaction>
</comment>
<comment type="activity regulation">
    <text evidence="11">Cap-specific adenosine methyltransferase activity is inhibited by zinc.</text>
</comment>
<comment type="biophysicochemical properties">
    <kinetics>
        <KM evidence="7">3.5 uM for m7GpppAm</KM>
        <KM evidence="9">82 nM for m7GpppAm oligonucleotide</KM>
        <KM evidence="10">33.4 nM for m7GpppAm capped mRNA</KM>
        <KM evidence="7">28 uM for m7GpppA</KM>
        <KM evidence="9">630 uM for m7GpppA oligonucleotide</KM>
        <KM evidence="10">208 nM for m7GpppAm dinucleotide</KM>
        <KM evidence="11">0.32 uM for capped mRNA analog (at pH 9.4)</KM>
        <KM evidence="11">0.7 uM for S-adenosyl-L-methionine (at pH 9.4)</KM>
        <KM evidence="11">0.3 uM for capped mRNA analog (at pH 8.0)</KM>
        <KM evidence="11">0.65 uM for S-adenosyl-L-methionine (at pH 8.0)</KM>
        <KM evidence="11">1.2 uM for capped mRNA analog (at pH 5.4)</KM>
        <KM evidence="11">0.94 uM for S-adenosyl-L-methionine (at pH 5.4)</KM>
        <text evidence="10 11">kcat is 0.036 min(-1) for m7GpppAm capped mRNA (PubMed:31279659). kcat is 0.34 min(-1) for m7GpppAm dinucleotide (PubMed:31279659). kcat is 1.76 min(-1) for capped mRNA analog (at pH 5.4) (PubMed:33428944). kcat is 1.44 min(-1) for S-adenosyl-L-methionine (at pH 5.4) (PubMed:33428944). kcat is 0.67 min(-1) for capped mRNA analog (at pH 8.0) (PubMed:33428944). kcat is 0.63 min(-1) for S-adenosyl-L-methionine (at pH 8.0) (PubMed:33428944). kcat is 1.18 min(-1) for capped mRNA analog (at pH 9.4) (PubMed:33428944). kcat is 1.68 min(-1) for S-adenosyl-L-methionine (at pH 9.4) (PubMed:33428944).</text>
    </kinetics>
</comment>
<comment type="subunit">
    <text evidence="5 6 7">Interacts with POLR2A; interacts with the phosphorylated C-terminal domain (CTD) of POLR2A.</text>
</comment>
<comment type="subcellular location">
    <subcellularLocation>
        <location evidence="5 6 10">Nucleus</location>
    </subcellularLocation>
</comment>
<comment type="tissue specificity">
    <text evidence="5">Ubiquitous.</text>
</comment>
<comment type="domain">
    <text evidence="5">The WW domain is sufficient for direct and specific interaction with the phosphorylated CTD of RNAPII largest subunit.</text>
</comment>
<comment type="similarity">
    <text evidence="15">Belongs to the CAPAM family.</text>
</comment>
<comment type="caution">
    <text evidence="7 9 10">The role of N(6),2'-O-dimethyladenosine cap (m6A(m)) on transcripts is unclear and subject to discussion (PubMed:30467178, PubMed:31279658, PubMed:31279659). According to a report, m6A(m) promotes translation of capped mRNAs (PubMed:30467178). In contrast, another study did not observe a clear effect on mRNA translation, but reported an increased stability of a subset of m6A(m) transcripts (PubMed:31279658). According to a third report, m6A(m) inhibits mRNA translation without affecting mRNA stability (PubMed:31279659).</text>
</comment>
<gene>
    <name evidence="12 16" type="primary">PCIF1</name>
    <name evidence="16" type="synonym">C20orf67</name>
    <name evidence="13" type="synonym">CAPAM</name>
    <name type="synonym">PPP1R121</name>
</gene>
<evidence type="ECO:0000250" key="1">
    <source>
        <dbReference type="UniProtKB" id="A0A0R4IKJ1"/>
    </source>
</evidence>
<evidence type="ECO:0000255" key="2"/>
<evidence type="ECO:0000255" key="3">
    <source>
        <dbReference type="PROSITE-ProRule" id="PRU00224"/>
    </source>
</evidence>
<evidence type="ECO:0000256" key="4">
    <source>
        <dbReference type="SAM" id="MobiDB-lite"/>
    </source>
</evidence>
<evidence type="ECO:0000269" key="5">
    <source>
    </source>
</evidence>
<evidence type="ECO:0000269" key="6">
    <source>
    </source>
</evidence>
<evidence type="ECO:0000269" key="7">
    <source>
    </source>
</evidence>
<evidence type="ECO:0000269" key="8">
    <source>
    </source>
</evidence>
<evidence type="ECO:0000269" key="9">
    <source>
    </source>
</evidence>
<evidence type="ECO:0000269" key="10">
    <source>
    </source>
</evidence>
<evidence type="ECO:0000269" key="11">
    <source>
    </source>
</evidence>
<evidence type="ECO:0000303" key="12">
    <source>
    </source>
</evidence>
<evidence type="ECO:0000303" key="13">
    <source>
    </source>
</evidence>
<evidence type="ECO:0000303" key="14">
    <source ref="17"/>
</evidence>
<evidence type="ECO:0000305" key="15"/>
<evidence type="ECO:0000312" key="16">
    <source>
        <dbReference type="HGNC" id="HGNC:16200"/>
    </source>
</evidence>
<evidence type="ECO:0007744" key="17">
    <source>
        <dbReference type="PDB" id="2JX8"/>
    </source>
</evidence>
<evidence type="ECO:0007744" key="18">
    <source>
        <dbReference type="PDB" id="6IRW"/>
    </source>
</evidence>
<evidence type="ECO:0007744" key="19">
    <source>
    </source>
</evidence>
<evidence type="ECO:0007744" key="20">
    <source>
    </source>
</evidence>
<evidence type="ECO:0007744" key="21">
    <source>
    </source>
</evidence>
<evidence type="ECO:0007744" key="22">
    <source>
    </source>
</evidence>
<evidence type="ECO:0007829" key="23">
    <source>
        <dbReference type="PDB" id="2JX8"/>
    </source>
</evidence>
<evidence type="ECO:0007829" key="24">
    <source>
        <dbReference type="PDB" id="6IRV"/>
    </source>
</evidence>
<evidence type="ECO:0007829" key="25">
    <source>
        <dbReference type="PDB" id="6IRW"/>
    </source>
</evidence>